<comment type="function">
    <text evidence="1">RNA polymerase that catalyzes the synthesis of short RNA molecules used as primers for DNA polymerase during DNA replication. Also part of the exosome, which is a complex involved in RNA degradation. Acts as a poly(A)-binding protein that enhances the interaction between heteromeric, adenine-rich transcripts and the exosome.</text>
</comment>
<comment type="catalytic activity">
    <reaction evidence="1">
        <text>ssDNA + n NTP = ssDNA/pppN(pN)n-1 hybrid + (n-1) diphosphate.</text>
        <dbReference type="EC" id="2.7.7.101"/>
    </reaction>
</comment>
<comment type="cofactor">
    <cofactor evidence="1">
        <name>Mg(2+)</name>
        <dbReference type="ChEBI" id="CHEBI:18420"/>
    </cofactor>
    <text evidence="1">Binds two Mg(2+) per subunit.</text>
</comment>
<comment type="subunit">
    <text evidence="1">Forms a ternary complex with MCM helicase and DNA. Component of the archaeal exosome complex.</text>
</comment>
<comment type="similarity">
    <text evidence="1">Belongs to the archaeal DnaG primase family.</text>
</comment>
<protein>
    <recommendedName>
        <fullName evidence="1">DNA primase DnaG</fullName>
        <ecNumber evidence="1">2.7.7.101</ecNumber>
    </recommendedName>
</protein>
<dbReference type="EC" id="2.7.7.101" evidence="1"/>
<dbReference type="EMBL" id="CP001140">
    <property type="protein sequence ID" value="ACL11618.1"/>
    <property type="molecule type" value="Genomic_DNA"/>
</dbReference>
<dbReference type="RefSeq" id="WP_012608959.1">
    <property type="nucleotide sequence ID" value="NC_011766.1"/>
</dbReference>
<dbReference type="SMR" id="B8D687"/>
<dbReference type="STRING" id="490899.DKAM_1292"/>
<dbReference type="GeneID" id="7171350"/>
<dbReference type="KEGG" id="dka:DKAM_1292"/>
<dbReference type="eggNOG" id="arCOG04281">
    <property type="taxonomic scope" value="Archaea"/>
</dbReference>
<dbReference type="HOGENOM" id="CLU_034626_0_0_2"/>
<dbReference type="Proteomes" id="UP000006903">
    <property type="component" value="Chromosome"/>
</dbReference>
<dbReference type="GO" id="GO:0005737">
    <property type="term" value="C:cytoplasm"/>
    <property type="evidence" value="ECO:0007669"/>
    <property type="project" value="TreeGrafter"/>
</dbReference>
<dbReference type="GO" id="GO:0000428">
    <property type="term" value="C:DNA-directed RNA polymerase complex"/>
    <property type="evidence" value="ECO:0007669"/>
    <property type="project" value="UniProtKB-KW"/>
</dbReference>
<dbReference type="GO" id="GO:0000178">
    <property type="term" value="C:exosome (RNase complex)"/>
    <property type="evidence" value="ECO:0007669"/>
    <property type="project" value="UniProtKB-KW"/>
</dbReference>
<dbReference type="GO" id="GO:1990077">
    <property type="term" value="C:primosome complex"/>
    <property type="evidence" value="ECO:0007669"/>
    <property type="project" value="UniProtKB-KW"/>
</dbReference>
<dbReference type="GO" id="GO:0003899">
    <property type="term" value="F:DNA-directed RNA polymerase activity"/>
    <property type="evidence" value="ECO:0007669"/>
    <property type="project" value="InterPro"/>
</dbReference>
<dbReference type="GO" id="GO:0046872">
    <property type="term" value="F:metal ion binding"/>
    <property type="evidence" value="ECO:0007669"/>
    <property type="project" value="UniProtKB-KW"/>
</dbReference>
<dbReference type="GO" id="GO:0008143">
    <property type="term" value="F:poly(A) binding"/>
    <property type="evidence" value="ECO:0007669"/>
    <property type="project" value="InterPro"/>
</dbReference>
<dbReference type="GO" id="GO:0006269">
    <property type="term" value="P:DNA replication, synthesis of primer"/>
    <property type="evidence" value="ECO:0007669"/>
    <property type="project" value="UniProtKB-UniRule"/>
</dbReference>
<dbReference type="CDD" id="cd01029">
    <property type="entry name" value="TOPRIM_primases"/>
    <property type="match status" value="1"/>
</dbReference>
<dbReference type="Gene3D" id="3.40.1360.10">
    <property type="match status" value="1"/>
</dbReference>
<dbReference type="HAMAP" id="MF_00007">
    <property type="entry name" value="DNA_primase_DnaG_arc"/>
    <property type="match status" value="1"/>
</dbReference>
<dbReference type="InterPro" id="IPR050219">
    <property type="entry name" value="DnaG_primase"/>
</dbReference>
<dbReference type="InterPro" id="IPR020607">
    <property type="entry name" value="Primase_DnaG_arc"/>
</dbReference>
<dbReference type="InterPro" id="IPR034154">
    <property type="entry name" value="TOPRIM_DnaG/twinkle"/>
</dbReference>
<dbReference type="InterPro" id="IPR006171">
    <property type="entry name" value="TOPRIM_dom"/>
</dbReference>
<dbReference type="NCBIfam" id="NF003108">
    <property type="entry name" value="PRK04031.1-1"/>
    <property type="match status" value="1"/>
</dbReference>
<dbReference type="PANTHER" id="PTHR30313">
    <property type="entry name" value="DNA PRIMASE"/>
    <property type="match status" value="1"/>
</dbReference>
<dbReference type="PANTHER" id="PTHR30313:SF2">
    <property type="entry name" value="DNA PRIMASE"/>
    <property type="match status" value="1"/>
</dbReference>
<dbReference type="Pfam" id="PF01751">
    <property type="entry name" value="Toprim"/>
    <property type="match status" value="1"/>
</dbReference>
<dbReference type="SMART" id="SM00493">
    <property type="entry name" value="TOPRIM"/>
    <property type="match status" value="1"/>
</dbReference>
<dbReference type="SUPFAM" id="SSF110455">
    <property type="entry name" value="Toprim domain"/>
    <property type="match status" value="1"/>
</dbReference>
<dbReference type="PROSITE" id="PS50880">
    <property type="entry name" value="TOPRIM"/>
    <property type="match status" value="1"/>
</dbReference>
<sequence>MAKYLIRARIEIDGVVEKHDIIGAIFGQTEGLFGNEFDLRVLQDKGRIGRIQVNTKTQGSKTTGEILIPSNLDRVETALLAALIETVDKVGPYDASISIVDIVDLRMEKIKKIMERTVEILRRWGKEKTPDVKELIKSIQEYLKVPEPVSYGPEELPAGPDVDKAEEIIIVEGRADVINLLRYGYTNIIALGGARRVPDTIKKLAELKKTTLFVDGDHGGDLIMKEVLRNAKIDYIARAPPGREVEELSSREIEEALKKKIEIFQYLEEQVKQGNKEAQLLIQIQRRLHKLPEEVVKPPEKVAKEITETLSLPVKLIEDIKSLYGTLEAIFYSSQWDQVKRIPVRDLVSEIQASEPEKIHAIVFDGIITQRLIDAVVEKRVKILIGARLGKITFKTPELTILTFNELA</sequence>
<organism>
    <name type="scientific">Desulfurococcus amylolyticus (strain DSM 18924 / JCM 16383 / VKM B-2413 / 1221n)</name>
    <name type="common">Desulfurococcus kamchatkensis</name>
    <dbReference type="NCBI Taxonomy" id="490899"/>
    <lineage>
        <taxon>Archaea</taxon>
        <taxon>Thermoproteota</taxon>
        <taxon>Thermoprotei</taxon>
        <taxon>Desulfurococcales</taxon>
        <taxon>Desulfurococcaceae</taxon>
        <taxon>Desulfurococcus</taxon>
    </lineage>
</organism>
<name>DNAG_DESA1</name>
<feature type="chain" id="PRO_1000197501" description="DNA primase DnaG">
    <location>
        <begin position="1"/>
        <end position="408"/>
    </location>
</feature>
<feature type="domain" description="Toprim" evidence="1">
    <location>
        <begin position="166"/>
        <end position="241"/>
    </location>
</feature>
<feature type="binding site" evidence="1">
    <location>
        <position position="172"/>
    </location>
    <ligand>
        <name>Mg(2+)</name>
        <dbReference type="ChEBI" id="CHEBI:18420"/>
        <label>1</label>
        <note>catalytic</note>
    </ligand>
</feature>
<feature type="binding site" evidence="1">
    <location>
        <position position="215"/>
    </location>
    <ligand>
        <name>Mg(2+)</name>
        <dbReference type="ChEBI" id="CHEBI:18420"/>
        <label>1</label>
        <note>catalytic</note>
    </ligand>
</feature>
<feature type="binding site" evidence="1">
    <location>
        <position position="215"/>
    </location>
    <ligand>
        <name>Mg(2+)</name>
        <dbReference type="ChEBI" id="CHEBI:18420"/>
        <label>2</label>
    </ligand>
</feature>
<feature type="binding site" evidence="1">
    <location>
        <position position="217"/>
    </location>
    <ligand>
        <name>Mg(2+)</name>
        <dbReference type="ChEBI" id="CHEBI:18420"/>
        <label>2</label>
    </ligand>
</feature>
<keyword id="KW-0235">DNA replication</keyword>
<keyword id="KW-0240">DNA-directed RNA polymerase</keyword>
<keyword id="KW-0271">Exosome</keyword>
<keyword id="KW-0460">Magnesium</keyword>
<keyword id="KW-0479">Metal-binding</keyword>
<keyword id="KW-0548">Nucleotidyltransferase</keyword>
<keyword id="KW-0639">Primosome</keyword>
<keyword id="KW-0804">Transcription</keyword>
<keyword id="KW-0808">Transferase</keyword>
<gene>
    <name evidence="1" type="primary">dnaG</name>
    <name type="ordered locus">DKAM_1292</name>
</gene>
<evidence type="ECO:0000255" key="1">
    <source>
        <dbReference type="HAMAP-Rule" id="MF_00007"/>
    </source>
</evidence>
<reference key="1">
    <citation type="journal article" date="2009" name="J. Bacteriol.">
        <title>Complete genome sequence of the anaerobic, protein-degrading hyperthermophilic crenarchaeon Desulfurococcus kamchatkensis.</title>
        <authorList>
            <person name="Ravin N.V."/>
            <person name="Mardanov A.V."/>
            <person name="Beletsky A.V."/>
            <person name="Kublanov I.V."/>
            <person name="Kolganova T.V."/>
            <person name="Lebedinsky A.V."/>
            <person name="Chernyh N.A."/>
            <person name="Bonch-Osmolovskaya E.A."/>
            <person name="Skryabin K.G."/>
        </authorList>
    </citation>
    <scope>NUCLEOTIDE SEQUENCE [LARGE SCALE GENOMIC DNA]</scope>
    <source>
        <strain>DSM 18924 / JCM 16383 / VKM B-2413 / 1221n</strain>
    </source>
</reference>
<accession>B8D687</accession>
<proteinExistence type="inferred from homology"/>